<keyword id="KW-1185">Reference proteome</keyword>
<keyword id="KW-0687">Ribonucleoprotein</keyword>
<keyword id="KW-0689">Ribosomal protein</keyword>
<gene>
    <name evidence="1" type="primary">rplL</name>
    <name type="ordered locus">SSP2215</name>
</gene>
<dbReference type="EMBL" id="AP008934">
    <property type="protein sequence ID" value="BAE19360.1"/>
    <property type="molecule type" value="Genomic_DNA"/>
</dbReference>
<dbReference type="RefSeq" id="WP_002484162.1">
    <property type="nucleotide sequence ID" value="NZ_MTGA01000039.1"/>
</dbReference>
<dbReference type="SMR" id="Q49V50"/>
<dbReference type="GeneID" id="66868369"/>
<dbReference type="KEGG" id="ssp:SSP2215"/>
<dbReference type="eggNOG" id="COG0222">
    <property type="taxonomic scope" value="Bacteria"/>
</dbReference>
<dbReference type="HOGENOM" id="CLU_086499_3_2_9"/>
<dbReference type="OrthoDB" id="9811748at2"/>
<dbReference type="Proteomes" id="UP000006371">
    <property type="component" value="Chromosome"/>
</dbReference>
<dbReference type="GO" id="GO:0022625">
    <property type="term" value="C:cytosolic large ribosomal subunit"/>
    <property type="evidence" value="ECO:0007669"/>
    <property type="project" value="TreeGrafter"/>
</dbReference>
<dbReference type="GO" id="GO:0003729">
    <property type="term" value="F:mRNA binding"/>
    <property type="evidence" value="ECO:0007669"/>
    <property type="project" value="TreeGrafter"/>
</dbReference>
<dbReference type="GO" id="GO:0003735">
    <property type="term" value="F:structural constituent of ribosome"/>
    <property type="evidence" value="ECO:0007669"/>
    <property type="project" value="InterPro"/>
</dbReference>
<dbReference type="GO" id="GO:0006412">
    <property type="term" value="P:translation"/>
    <property type="evidence" value="ECO:0007669"/>
    <property type="project" value="UniProtKB-UniRule"/>
</dbReference>
<dbReference type="CDD" id="cd00387">
    <property type="entry name" value="Ribosomal_L7_L12"/>
    <property type="match status" value="1"/>
</dbReference>
<dbReference type="FunFam" id="1.20.5.710:FF:000002">
    <property type="entry name" value="50S ribosomal protein L7/L12"/>
    <property type="match status" value="1"/>
</dbReference>
<dbReference type="FunFam" id="3.30.1390.10:FF:000001">
    <property type="entry name" value="50S ribosomal protein L7/L12"/>
    <property type="match status" value="1"/>
</dbReference>
<dbReference type="Gene3D" id="3.30.1390.10">
    <property type="match status" value="1"/>
</dbReference>
<dbReference type="Gene3D" id="1.20.5.710">
    <property type="entry name" value="Single helix bin"/>
    <property type="match status" value="1"/>
</dbReference>
<dbReference type="HAMAP" id="MF_00368">
    <property type="entry name" value="Ribosomal_bL12"/>
    <property type="match status" value="1"/>
</dbReference>
<dbReference type="InterPro" id="IPR000206">
    <property type="entry name" value="Ribosomal_bL12"/>
</dbReference>
<dbReference type="InterPro" id="IPR013823">
    <property type="entry name" value="Ribosomal_bL12_C"/>
</dbReference>
<dbReference type="InterPro" id="IPR014719">
    <property type="entry name" value="Ribosomal_bL12_C/ClpS-like"/>
</dbReference>
<dbReference type="InterPro" id="IPR008932">
    <property type="entry name" value="Ribosomal_bL12_oligo"/>
</dbReference>
<dbReference type="InterPro" id="IPR036235">
    <property type="entry name" value="Ribosomal_bL12_oligo_N_sf"/>
</dbReference>
<dbReference type="NCBIfam" id="TIGR00855">
    <property type="entry name" value="L12"/>
    <property type="match status" value="1"/>
</dbReference>
<dbReference type="PANTHER" id="PTHR45987">
    <property type="entry name" value="39S RIBOSOMAL PROTEIN L12"/>
    <property type="match status" value="1"/>
</dbReference>
<dbReference type="PANTHER" id="PTHR45987:SF4">
    <property type="entry name" value="LARGE RIBOSOMAL SUBUNIT PROTEIN BL12M"/>
    <property type="match status" value="1"/>
</dbReference>
<dbReference type="Pfam" id="PF00542">
    <property type="entry name" value="Ribosomal_L12"/>
    <property type="match status" value="1"/>
</dbReference>
<dbReference type="Pfam" id="PF16320">
    <property type="entry name" value="Ribosomal_L12_N"/>
    <property type="match status" value="1"/>
</dbReference>
<dbReference type="SUPFAM" id="SSF54736">
    <property type="entry name" value="ClpS-like"/>
    <property type="match status" value="1"/>
</dbReference>
<dbReference type="SUPFAM" id="SSF48300">
    <property type="entry name" value="Ribosomal protein L7/12, oligomerisation (N-terminal) domain"/>
    <property type="match status" value="1"/>
</dbReference>
<sequence>MANQEQIIEAIKEMSVLELNDLVKAIEEEFGVTAAAPVAAAGAAAGGDAEAEKTDFDVELTSAGSSKIKVVKAVKEATGLGLKDAKELVDGAPKVIKEALPKEEAEKLKEALEEVGATVELK</sequence>
<name>RL7_STAS1</name>
<protein>
    <recommendedName>
        <fullName evidence="1">Large ribosomal subunit protein bL12</fullName>
    </recommendedName>
    <alternativeName>
        <fullName evidence="2">50S ribosomal protein L7/L12</fullName>
    </alternativeName>
</protein>
<reference key="1">
    <citation type="journal article" date="2005" name="Proc. Natl. Acad. Sci. U.S.A.">
        <title>Whole genome sequence of Staphylococcus saprophyticus reveals the pathogenesis of uncomplicated urinary tract infection.</title>
        <authorList>
            <person name="Kuroda M."/>
            <person name="Yamashita A."/>
            <person name="Hirakawa H."/>
            <person name="Kumano M."/>
            <person name="Morikawa K."/>
            <person name="Higashide M."/>
            <person name="Maruyama A."/>
            <person name="Inose Y."/>
            <person name="Matoba K."/>
            <person name="Toh H."/>
            <person name="Kuhara S."/>
            <person name="Hattori M."/>
            <person name="Ohta T."/>
        </authorList>
    </citation>
    <scope>NUCLEOTIDE SEQUENCE [LARGE SCALE GENOMIC DNA]</scope>
    <source>
        <strain>ATCC 15305 / DSM 20229 / NCIMB 8711 / NCTC 7292 / S-41</strain>
    </source>
</reference>
<organism>
    <name type="scientific">Staphylococcus saprophyticus subsp. saprophyticus (strain ATCC 15305 / DSM 20229 / NCIMB 8711 / NCTC 7292 / S-41)</name>
    <dbReference type="NCBI Taxonomy" id="342451"/>
    <lineage>
        <taxon>Bacteria</taxon>
        <taxon>Bacillati</taxon>
        <taxon>Bacillota</taxon>
        <taxon>Bacilli</taxon>
        <taxon>Bacillales</taxon>
        <taxon>Staphylococcaceae</taxon>
        <taxon>Staphylococcus</taxon>
    </lineage>
</organism>
<feature type="chain" id="PRO_0000157584" description="Large ribosomal subunit protein bL12">
    <location>
        <begin position="1"/>
        <end position="122"/>
    </location>
</feature>
<accession>Q49V50</accession>
<evidence type="ECO:0000255" key="1">
    <source>
        <dbReference type="HAMAP-Rule" id="MF_00368"/>
    </source>
</evidence>
<evidence type="ECO:0000305" key="2"/>
<proteinExistence type="inferred from homology"/>
<comment type="function">
    <text evidence="1">Forms part of the ribosomal stalk which helps the ribosome interact with GTP-bound translation factors. Is thus essential for accurate translation.</text>
</comment>
<comment type="subunit">
    <text evidence="1">Homodimer. Part of the ribosomal stalk of the 50S ribosomal subunit. Forms a multimeric L10(L12)X complex, where L10 forms an elongated spine to which 2 to 4 L12 dimers bind in a sequential fashion. Binds GTP-bound translation factors.</text>
</comment>
<comment type="similarity">
    <text evidence="1">Belongs to the bacterial ribosomal protein bL12 family.</text>
</comment>